<evidence type="ECO:0000269" key="1">
    <source>
    </source>
</evidence>
<evidence type="ECO:0000269" key="2">
    <source>
    </source>
</evidence>
<evidence type="ECO:0000269" key="3">
    <source>
    </source>
</evidence>
<evidence type="ECO:0000269" key="4">
    <source>
    </source>
</evidence>
<evidence type="ECO:0000269" key="5">
    <source>
    </source>
</evidence>
<evidence type="ECO:0000305" key="6"/>
<protein>
    <recommendedName>
        <fullName>Miraculin</fullName>
        <shortName>MIR</shortName>
    </recommendedName>
</protein>
<name>MIRA_SYNDU</name>
<proteinExistence type="evidence at protein level"/>
<reference key="1">
    <citation type="journal article" date="1995" name="Gene">
        <title>Cloning and sequencing of a cDNA encoding a taste-modifying protein, miraculin.</title>
        <authorList>
            <person name="Masuda Y."/>
            <person name="Nirasawa S."/>
            <person name="Nakaya K."/>
            <person name="Kurihara Y."/>
        </authorList>
    </citation>
    <scope>NUCLEOTIDE SEQUENCE [MRNA]</scope>
    <scope>TISSUE SPECIFICITY</scope>
    <source>
        <tissue>Fruit</tissue>
    </source>
</reference>
<reference key="2">
    <citation type="journal article" date="1989" name="J. Biol. Chem.">
        <title>Complete amino acid sequence and structure characterization of the taste-modifying protein, miraculin.</title>
        <authorList>
            <person name="Theerasilp S."/>
            <person name="Hitotsuya H."/>
            <person name="Nakajo S."/>
            <person name="Nakaja K."/>
            <person name="Nakamura Y."/>
            <person name="Kurihara Y."/>
        </authorList>
    </citation>
    <scope>PROTEIN SEQUENCE OF 30-220</scope>
</reference>
<reference key="3">
    <citation type="journal article" date="1988" name="J. Biol. Chem.">
        <title>Complete purification and characterization of the taste-modifying protein, miraculin, from miracle fruit.</title>
        <authorList>
            <person name="Theerasilp S."/>
            <person name="Kurihara Y."/>
        </authorList>
    </citation>
    <scope>PROTEIN SEQUENCE OF 30-50</scope>
</reference>
<reference key="4">
    <citation type="journal article" date="1991" name="Biochim. Biophys. Acta">
        <title>Determination of disulfide array and subunit structure of taste-modifying protein, miraculin.</title>
        <authorList>
            <person name="Igeta H."/>
            <person name="Tamura Y."/>
            <person name="Nakaya K."/>
            <person name="Nakmura Y."/>
            <person name="Kurihara Y."/>
        </authorList>
    </citation>
    <scope>DISULFIDE BONDS</scope>
</reference>
<reference key="5">
    <citation type="journal article" date="1990" name="J. Biol. Chem.">
        <title>Structural study of asparagine-linked oligosaccharide moiety of taste-modifying protein, miraculin.</title>
        <authorList>
            <person name="Takahashi N."/>
            <person name="Hitotsuya H."/>
            <person name="Hanzawa H."/>
            <person name="Arata Y."/>
            <person name="Kurihara Y."/>
        </authorList>
    </citation>
    <scope>GLYCOSYLATION AT ASN-71 AND ASN-215</scope>
</reference>
<keyword id="KW-0903">Direct protein sequencing</keyword>
<keyword id="KW-1015">Disulfide bond</keyword>
<keyword id="KW-0325">Glycoprotein</keyword>
<keyword id="KW-0732">Signal</keyword>
<keyword id="KW-0776">Taste-modifying protein</keyword>
<dbReference type="EMBL" id="D38598">
    <property type="protein sequence ID" value="BAA07603.1"/>
    <property type="molecule type" value="mRNA"/>
</dbReference>
<dbReference type="PIR" id="JC4232">
    <property type="entry name" value="A33872"/>
</dbReference>
<dbReference type="SMR" id="P13087"/>
<dbReference type="MEROPS" id="I03.030"/>
<dbReference type="GlyConnect" id="369">
    <property type="glycosylation" value="5 N-Linked glycans (2 sites)"/>
</dbReference>
<dbReference type="GO" id="GO:0004866">
    <property type="term" value="F:endopeptidase inhibitor activity"/>
    <property type="evidence" value="ECO:0007669"/>
    <property type="project" value="InterPro"/>
</dbReference>
<dbReference type="CDD" id="cd23375">
    <property type="entry name" value="beta-trefoil_STI_VvMLP-like"/>
    <property type="match status" value="1"/>
</dbReference>
<dbReference type="Gene3D" id="2.80.10.50">
    <property type="match status" value="1"/>
</dbReference>
<dbReference type="InterPro" id="IPR011065">
    <property type="entry name" value="Kunitz_inhibitor_STI-like_sf"/>
</dbReference>
<dbReference type="InterPro" id="IPR002160">
    <property type="entry name" value="Prot_inh_Kunz-lg"/>
</dbReference>
<dbReference type="PANTHER" id="PTHR33107">
    <property type="entry name" value="KUNITZ TRYPSIN INHIBITOR 2"/>
    <property type="match status" value="1"/>
</dbReference>
<dbReference type="PANTHER" id="PTHR33107:SF5">
    <property type="entry name" value="KUNITZ TRYPSIN INHIBITOR 5"/>
    <property type="match status" value="1"/>
</dbReference>
<dbReference type="Pfam" id="PF00197">
    <property type="entry name" value="Kunitz_legume"/>
    <property type="match status" value="1"/>
</dbReference>
<dbReference type="PRINTS" id="PR00291">
    <property type="entry name" value="KUNITZINHBTR"/>
</dbReference>
<dbReference type="SMART" id="SM00452">
    <property type="entry name" value="STI"/>
    <property type="match status" value="1"/>
</dbReference>
<dbReference type="SUPFAM" id="SSF50386">
    <property type="entry name" value="STI-like"/>
    <property type="match status" value="1"/>
</dbReference>
<dbReference type="PROSITE" id="PS00283">
    <property type="entry name" value="SOYBEAN_KUNITZ"/>
    <property type="match status" value="1"/>
</dbReference>
<organism>
    <name type="scientific">Synsepalum dulcificum</name>
    <name type="common">Miracle fruit</name>
    <name type="synonym">Richadella dulcifica</name>
    <dbReference type="NCBI Taxonomy" id="3743"/>
    <lineage>
        <taxon>Eukaryota</taxon>
        <taxon>Viridiplantae</taxon>
        <taxon>Streptophyta</taxon>
        <taxon>Embryophyta</taxon>
        <taxon>Tracheophyta</taxon>
        <taxon>Spermatophyta</taxon>
        <taxon>Magnoliopsida</taxon>
        <taxon>eudicotyledons</taxon>
        <taxon>Gunneridae</taxon>
        <taxon>Pentapetalae</taxon>
        <taxon>asterids</taxon>
        <taxon>Ericales</taxon>
        <taxon>Sapotaceae</taxon>
        <taxon>Chrysophylloideae</taxon>
        <taxon>Synsepalum</taxon>
    </lineage>
</organism>
<feature type="signal peptide" evidence="3 4">
    <location>
        <begin position="1"/>
        <end position="29"/>
    </location>
</feature>
<feature type="chain" id="PRO_0000016935" description="Miraculin">
    <location>
        <begin position="30"/>
        <end position="220"/>
    </location>
</feature>
<feature type="glycosylation site" id="CAR_000132" description="N-linked (GlcNAc...) asparagine" evidence="2">
    <location>
        <position position="71"/>
    </location>
</feature>
<feature type="glycosylation site" id="CAR_000133" description="N-linked (GlcNAc...) asparagine" evidence="2">
    <location>
        <position position="215"/>
    </location>
</feature>
<feature type="disulfide bond" evidence="1">
    <location>
        <begin position="76"/>
        <end position="121"/>
    </location>
</feature>
<feature type="disulfide bond" description="Interchain" evidence="1">
    <location>
        <position position="167"/>
    </location>
</feature>
<feature type="disulfide bond" evidence="1">
    <location>
        <begin position="177"/>
        <end position="188"/>
    </location>
</feature>
<feature type="disulfide bond" evidence="1">
    <location>
        <begin position="181"/>
        <end position="184"/>
    </location>
</feature>
<feature type="sequence conflict" description="In Ref. 2; AA sequence." evidence="6" ref="2">
    <original>W</original>
    <variation>S</variation>
    <location>
        <position position="129"/>
    </location>
</feature>
<sequence>MKELTMLSLSFFFVSALLAAAANPLLSAADSAPNPVLDIDGEKLRTGTNYYIVPVLRDHGGGLTVSATTPNGTFVCPPRVVQTRKEVDHDRPLAFFPENPKEDVVRVSTDLNINFSAFMPCRWTSSTVWRLDKYDESTGQYFVTIGGVKGNPGPETISSWFKIEEFCGSGFYKLVFCPTVCGSCKVKCGDVGIYIDQKGRRRLALSDKPFAFEFNKTVYF</sequence>
<accession>P13087</accession>
<accession>Q41153</accession>
<comment type="function">
    <text>Miraculin has the property of modifying a sour taste into a sweet taste. This alteration of taste perception persists for many minutes.</text>
</comment>
<comment type="subunit">
    <text>Homotetramer; dimer of homodimer.</text>
</comment>
<comment type="tissue specificity">
    <text evidence="5">Expressed in fruit pulp after pollination. Not expressed in seeds, stems or leaves.</text>
</comment>
<comment type="PTM">
    <text evidence="2">Glycosylated; contains as much as 13,9% of sugars (glucosamine, mannose, galactose, xylose, and fucose).</text>
</comment>
<comment type="similarity">
    <text evidence="6">Belongs to the protease inhibitor I3 (leguminous Kunitz-type inhibitor) family.</text>
</comment>
<comment type="online information" name="Protein Spotlight">
    <link uri="https://www.proteinspotlight.org/back_issues/017"/>
    <text>The sweet side of life - Issue 17 of December 2001</text>
</comment>